<keyword id="KW-1003">Cell membrane</keyword>
<keyword id="KW-0966">Cell projection</keyword>
<keyword id="KW-0157">Chromophore</keyword>
<keyword id="KW-1015">Disulfide bond</keyword>
<keyword id="KW-0297">G-protein coupled receptor</keyword>
<keyword id="KW-0325">Glycoprotein</keyword>
<keyword id="KW-0472">Membrane</keyword>
<keyword id="KW-0597">Phosphoprotein</keyword>
<keyword id="KW-0600">Photoreceptor protein</keyword>
<keyword id="KW-0675">Receptor</keyword>
<keyword id="KW-0681">Retinal protein</keyword>
<keyword id="KW-0716">Sensory transduction</keyword>
<keyword id="KW-0807">Transducer</keyword>
<keyword id="KW-0812">Transmembrane</keyword>
<keyword id="KW-1133">Transmembrane helix</keyword>
<keyword id="KW-0844">Vision</keyword>
<sequence>LHMIHLHWYQYPPMNPMMYPLLLIFMLFTGILCLAGNFVTIWVFMNTKSLRTPANLLVVNLAMSDFLMMFTMFPPMMVTCYYHTWTLGPTFCQVYAFLGNLCGCASIWTMVFITFDRYNVIVKGVAGEPLSTKKASLWILTIWVLSTTWCIAPFFGWNHYVPEGNLTGCGTDYLSEDILSRSYLYVYSTWVYFLPLAITIYCYVFIIKAVAAHEKGMRDQAKKMGIKSLRNEEAQKTSAECRLAKIAMTTVALWFIAWTPCLLINWVGMFARSYLSPVYTIWGYVFAKANAVYNPIVYAIS</sequence>
<evidence type="ECO:0000250" key="1">
    <source>
        <dbReference type="UniProtKB" id="P02699"/>
    </source>
</evidence>
<evidence type="ECO:0000250" key="2">
    <source>
        <dbReference type="UniProtKB" id="P31356"/>
    </source>
</evidence>
<evidence type="ECO:0000250" key="3">
    <source>
        <dbReference type="UniProtKB" id="P35356"/>
    </source>
</evidence>
<evidence type="ECO:0000255" key="4"/>
<evidence type="ECO:0000255" key="5">
    <source>
        <dbReference type="PROSITE-ProRule" id="PRU00521"/>
    </source>
</evidence>
<evidence type="ECO:0000305" key="6"/>
<name>OPSD_PROSE</name>
<organism>
    <name type="scientific">Procambarus seminolae</name>
    <name type="common">Crayfish</name>
    <dbReference type="NCBI Taxonomy" id="61505"/>
    <lineage>
        <taxon>Eukaryota</taxon>
        <taxon>Metazoa</taxon>
        <taxon>Ecdysozoa</taxon>
        <taxon>Arthropoda</taxon>
        <taxon>Crustacea</taxon>
        <taxon>Multicrustacea</taxon>
        <taxon>Malacostraca</taxon>
        <taxon>Eumalacostraca</taxon>
        <taxon>Eucarida</taxon>
        <taxon>Decapoda</taxon>
        <taxon>Pleocyemata</taxon>
        <taxon>Astacidea</taxon>
        <taxon>Astacoidea</taxon>
        <taxon>Cambaridae</taxon>
        <taxon>Procambarus</taxon>
    </lineage>
</organism>
<comment type="function">
    <text evidence="3">Photoreceptor required for image-forming vision at low light intensity. Can use both retinal and 3-dehydroretinal as visual pigment. Light-induced isomerization of 11-cis to all-trans retinal triggers a conformational change that activates signaling via G-proteins. Signaling via GNAQ probably mediates the activation of phospholipase C.</text>
</comment>
<comment type="subunit">
    <text evidence="3">Homodimer. Interacts with GNAQ.</text>
</comment>
<comment type="subcellular location">
    <subcellularLocation>
        <location evidence="3">Cell projection</location>
        <location evidence="3">Rhabdomere membrane</location>
        <topology evidence="2">Multi-pass membrane protein</topology>
    </subcellularLocation>
</comment>
<comment type="PTM">
    <text evidence="1">Contains one covalently linked retinal chromophore.</text>
</comment>
<comment type="similarity">
    <text evidence="5">Belongs to the G-protein coupled receptor 1 family. Opsin subfamily.</text>
</comment>
<gene>
    <name type="primary">RHO</name>
</gene>
<protein>
    <recommendedName>
        <fullName>Rhodopsin</fullName>
    </recommendedName>
</protein>
<accession>O18486</accession>
<dbReference type="EMBL" id="AF005388">
    <property type="protein sequence ID" value="AAB63379.1"/>
    <property type="molecule type" value="Genomic_DNA"/>
</dbReference>
<dbReference type="SMR" id="O18486"/>
<dbReference type="GlyCosmos" id="O18486">
    <property type="glycosylation" value="1 site, No reported glycans"/>
</dbReference>
<dbReference type="GO" id="GO:0042995">
    <property type="term" value="C:cell projection"/>
    <property type="evidence" value="ECO:0007669"/>
    <property type="project" value="UniProtKB-KW"/>
</dbReference>
<dbReference type="GO" id="GO:0005886">
    <property type="term" value="C:plasma membrane"/>
    <property type="evidence" value="ECO:0000250"/>
    <property type="project" value="UniProtKB"/>
</dbReference>
<dbReference type="GO" id="GO:0004930">
    <property type="term" value="F:G protein-coupled receptor activity"/>
    <property type="evidence" value="ECO:0007669"/>
    <property type="project" value="UniProtKB-KW"/>
</dbReference>
<dbReference type="GO" id="GO:0009881">
    <property type="term" value="F:photoreceptor activity"/>
    <property type="evidence" value="ECO:0007669"/>
    <property type="project" value="UniProtKB-KW"/>
</dbReference>
<dbReference type="GO" id="GO:0007602">
    <property type="term" value="P:phototransduction"/>
    <property type="evidence" value="ECO:0007669"/>
    <property type="project" value="UniProtKB-KW"/>
</dbReference>
<dbReference type="GO" id="GO:0007601">
    <property type="term" value="P:visual perception"/>
    <property type="evidence" value="ECO:0007669"/>
    <property type="project" value="UniProtKB-KW"/>
</dbReference>
<dbReference type="CDD" id="cd15079">
    <property type="entry name" value="7tmA_photoreceptors_insect"/>
    <property type="match status" value="1"/>
</dbReference>
<dbReference type="FunFam" id="1.20.1070.10:FF:000044">
    <property type="entry name" value="Opsin, ultraviolet-sensitive"/>
    <property type="match status" value="1"/>
</dbReference>
<dbReference type="Gene3D" id="1.20.1070.10">
    <property type="entry name" value="Rhodopsin 7-helix transmembrane proteins"/>
    <property type="match status" value="1"/>
</dbReference>
<dbReference type="InterPro" id="IPR050125">
    <property type="entry name" value="GPCR_opsins"/>
</dbReference>
<dbReference type="InterPro" id="IPR000276">
    <property type="entry name" value="GPCR_Rhodpsn"/>
</dbReference>
<dbReference type="InterPro" id="IPR017452">
    <property type="entry name" value="GPCR_Rhodpsn_7TM"/>
</dbReference>
<dbReference type="InterPro" id="IPR001760">
    <property type="entry name" value="Opsin"/>
</dbReference>
<dbReference type="InterPro" id="IPR001391">
    <property type="entry name" value="Opsin_lateye"/>
</dbReference>
<dbReference type="InterPro" id="IPR027430">
    <property type="entry name" value="Retinal_BS"/>
</dbReference>
<dbReference type="PANTHER" id="PTHR24240">
    <property type="entry name" value="OPSIN"/>
    <property type="match status" value="1"/>
</dbReference>
<dbReference type="Pfam" id="PF00001">
    <property type="entry name" value="7tm_1"/>
    <property type="match status" value="1"/>
</dbReference>
<dbReference type="PRINTS" id="PR00237">
    <property type="entry name" value="GPCRRHODOPSN"/>
</dbReference>
<dbReference type="PRINTS" id="PR00238">
    <property type="entry name" value="OPSIN"/>
</dbReference>
<dbReference type="PRINTS" id="PR00578">
    <property type="entry name" value="OPSINLTRLEYE"/>
</dbReference>
<dbReference type="SUPFAM" id="SSF81321">
    <property type="entry name" value="Family A G protein-coupled receptor-like"/>
    <property type="match status" value="1"/>
</dbReference>
<dbReference type="PROSITE" id="PS00237">
    <property type="entry name" value="G_PROTEIN_RECEP_F1_1"/>
    <property type="match status" value="1"/>
</dbReference>
<dbReference type="PROSITE" id="PS50262">
    <property type="entry name" value="G_PROTEIN_RECEP_F1_2"/>
    <property type="match status" value="1"/>
</dbReference>
<dbReference type="PROSITE" id="PS00238">
    <property type="entry name" value="OPSIN"/>
    <property type="match status" value="1"/>
</dbReference>
<proteinExistence type="inferred from homology"/>
<feature type="chain" id="PRO_0000197746" description="Rhodopsin">
    <location>
        <begin position="1" status="less than"/>
        <end position="301" status="greater than"/>
    </location>
</feature>
<feature type="topological domain" description="Extracellular" evidence="6">
    <location>
        <begin position="1" status="less than"/>
        <end position="18"/>
    </location>
</feature>
<feature type="transmembrane region" description="Helical; Name=1" evidence="1">
    <location>
        <begin position="19"/>
        <end position="43"/>
    </location>
</feature>
<feature type="topological domain" description="Cytoplasmic" evidence="6">
    <location>
        <begin position="44"/>
        <end position="55"/>
    </location>
</feature>
<feature type="transmembrane region" description="Helical; Name=2" evidence="1">
    <location>
        <begin position="56"/>
        <end position="78"/>
    </location>
</feature>
<feature type="topological domain" description="Extracellular" evidence="6">
    <location>
        <begin position="79"/>
        <end position="92"/>
    </location>
</feature>
<feature type="transmembrane region" description="Helical; Name=3" evidence="1">
    <location>
        <begin position="93"/>
        <end position="115"/>
    </location>
</feature>
<feature type="topological domain" description="Cytoplasmic" evidence="6">
    <location>
        <begin position="116"/>
        <end position="134"/>
    </location>
</feature>
<feature type="transmembrane region" description="Helical; Name=4" evidence="1">
    <location>
        <begin position="135"/>
        <end position="155"/>
    </location>
</feature>
<feature type="topological domain" description="Extracellular" evidence="6">
    <location>
        <begin position="156"/>
        <end position="182"/>
    </location>
</feature>
<feature type="transmembrane region" description="Helical; Name=5" evidence="1">
    <location>
        <begin position="183"/>
        <end position="204"/>
    </location>
</feature>
<feature type="topological domain" description="Cytoplasmic" evidence="6">
    <location>
        <begin position="205"/>
        <end position="245"/>
    </location>
</feature>
<feature type="transmembrane region" description="Helical; Name=6" evidence="1">
    <location>
        <begin position="246"/>
        <end position="267"/>
    </location>
</feature>
<feature type="topological domain" description="Extracellular" evidence="6">
    <location>
        <begin position="268"/>
        <end position="278"/>
    </location>
</feature>
<feature type="transmembrane region" description="Helical; Name=7" evidence="1">
    <location>
        <begin position="279"/>
        <end position="300"/>
    </location>
</feature>
<feature type="short sequence motif" description="'Ionic lock' involved in activated form stabilization" evidence="1">
    <location>
        <begin position="116"/>
        <end position="118"/>
    </location>
</feature>
<feature type="modified residue" description="N6-(retinylidene)lysine" evidence="1">
    <location>
        <position position="288"/>
    </location>
</feature>
<feature type="glycosylation site" description="N-linked (GlcNAc...) asparagine" evidence="4">
    <location>
        <position position="165"/>
    </location>
</feature>
<feature type="disulfide bond" evidence="5">
    <location>
        <begin position="92"/>
        <end position="169"/>
    </location>
</feature>
<feature type="non-terminal residue">
    <location>
        <position position="1"/>
    </location>
</feature>
<feature type="non-terminal residue">
    <location>
        <position position="301"/>
    </location>
</feature>
<reference key="1">
    <citation type="journal article" date="1997" name="Nature">
        <title>Rhodopsin evolution in the dark.</title>
        <authorList>
            <person name="Crandall K.A."/>
            <person name="Hillis D.M."/>
        </authorList>
    </citation>
    <scope>NUCLEOTIDE SEQUENCE [GENOMIC DNA]</scope>
</reference>